<protein>
    <recommendedName>
        <fullName evidence="1">Elongation factor P</fullName>
        <shortName evidence="1">EF-P</shortName>
    </recommendedName>
</protein>
<evidence type="ECO:0000255" key="1">
    <source>
        <dbReference type="HAMAP-Rule" id="MF_00141"/>
    </source>
</evidence>
<feature type="chain" id="PRO_1000123029" description="Elongation factor P">
    <location>
        <begin position="1"/>
        <end position="186"/>
    </location>
</feature>
<reference key="1">
    <citation type="journal article" date="2010" name="Genome Biol.">
        <title>Structure and dynamics of the pan-genome of Streptococcus pneumoniae and closely related species.</title>
        <authorList>
            <person name="Donati C."/>
            <person name="Hiller N.L."/>
            <person name="Tettelin H."/>
            <person name="Muzzi A."/>
            <person name="Croucher N.J."/>
            <person name="Angiuoli S.V."/>
            <person name="Oggioni M."/>
            <person name="Dunning Hotopp J.C."/>
            <person name="Hu F.Z."/>
            <person name="Riley D.R."/>
            <person name="Covacci A."/>
            <person name="Mitchell T.J."/>
            <person name="Bentley S.D."/>
            <person name="Kilian M."/>
            <person name="Ehrlich G.D."/>
            <person name="Rappuoli R."/>
            <person name="Moxon E.R."/>
            <person name="Masignani V."/>
        </authorList>
    </citation>
    <scope>NUCLEOTIDE SEQUENCE [LARGE SCALE GENOMIC DNA]</scope>
    <source>
        <strain>70585</strain>
    </source>
</reference>
<sequence length="186" mass="20600">MIEASKLKAGMTFETADGKLIRVLEASHHKPGKGNTIMRMKLRDVRTGSTFDTSYRPEEKFEQAIIETVPAQYLYKMDDTAYFMNTETYDQYEIPVVNVENELLYILENSDVKIQFYGTEVIGVTVPTTVELTVAETQPSIKGATVTGSGKPATMETGLVVNVPDFIEAGQKLVINTAEGTYVSRA</sequence>
<gene>
    <name evidence="1" type="primary">efp</name>
    <name type="ordered locus">SP70585_0504</name>
</gene>
<accession>C1C5H0</accession>
<name>EFP_STRP7</name>
<keyword id="KW-0963">Cytoplasm</keyword>
<keyword id="KW-0251">Elongation factor</keyword>
<keyword id="KW-0648">Protein biosynthesis</keyword>
<organism>
    <name type="scientific">Streptococcus pneumoniae (strain 70585)</name>
    <dbReference type="NCBI Taxonomy" id="488221"/>
    <lineage>
        <taxon>Bacteria</taxon>
        <taxon>Bacillati</taxon>
        <taxon>Bacillota</taxon>
        <taxon>Bacilli</taxon>
        <taxon>Lactobacillales</taxon>
        <taxon>Streptococcaceae</taxon>
        <taxon>Streptococcus</taxon>
    </lineage>
</organism>
<comment type="function">
    <text evidence="1">Involved in peptide bond synthesis. Stimulates efficient translation and peptide-bond synthesis on native or reconstituted 70S ribosomes in vitro. Probably functions indirectly by altering the affinity of the ribosome for aminoacyl-tRNA, thus increasing their reactivity as acceptors for peptidyl transferase.</text>
</comment>
<comment type="pathway">
    <text evidence="1">Protein biosynthesis; polypeptide chain elongation.</text>
</comment>
<comment type="subcellular location">
    <subcellularLocation>
        <location evidence="1">Cytoplasm</location>
    </subcellularLocation>
</comment>
<comment type="similarity">
    <text evidence="1">Belongs to the elongation factor P family.</text>
</comment>
<proteinExistence type="inferred from homology"/>
<dbReference type="EMBL" id="CP000918">
    <property type="protein sequence ID" value="ACO16925.1"/>
    <property type="molecule type" value="Genomic_DNA"/>
</dbReference>
<dbReference type="RefSeq" id="WP_000568640.1">
    <property type="nucleotide sequence ID" value="NC_012468.1"/>
</dbReference>
<dbReference type="SMR" id="C1C5H0"/>
<dbReference type="GeneID" id="49599200"/>
<dbReference type="KEGG" id="snm:SP70585_0504"/>
<dbReference type="HOGENOM" id="CLU_074944_3_0_9"/>
<dbReference type="UniPathway" id="UPA00345"/>
<dbReference type="Proteomes" id="UP000002211">
    <property type="component" value="Chromosome"/>
</dbReference>
<dbReference type="GO" id="GO:0005737">
    <property type="term" value="C:cytoplasm"/>
    <property type="evidence" value="ECO:0007669"/>
    <property type="project" value="UniProtKB-SubCell"/>
</dbReference>
<dbReference type="GO" id="GO:0003746">
    <property type="term" value="F:translation elongation factor activity"/>
    <property type="evidence" value="ECO:0007669"/>
    <property type="project" value="UniProtKB-UniRule"/>
</dbReference>
<dbReference type="GO" id="GO:0043043">
    <property type="term" value="P:peptide biosynthetic process"/>
    <property type="evidence" value="ECO:0007669"/>
    <property type="project" value="InterPro"/>
</dbReference>
<dbReference type="CDD" id="cd04470">
    <property type="entry name" value="S1_EF-P_repeat_1"/>
    <property type="match status" value="1"/>
</dbReference>
<dbReference type="CDD" id="cd05794">
    <property type="entry name" value="S1_EF-P_repeat_2"/>
    <property type="match status" value="1"/>
</dbReference>
<dbReference type="FunFam" id="2.30.30.30:FF:000003">
    <property type="entry name" value="Elongation factor P"/>
    <property type="match status" value="1"/>
</dbReference>
<dbReference type="FunFam" id="2.40.50.140:FF:000004">
    <property type="entry name" value="Elongation factor P"/>
    <property type="match status" value="1"/>
</dbReference>
<dbReference type="FunFam" id="2.40.50.140:FF:000009">
    <property type="entry name" value="Elongation factor P"/>
    <property type="match status" value="1"/>
</dbReference>
<dbReference type="Gene3D" id="2.30.30.30">
    <property type="match status" value="1"/>
</dbReference>
<dbReference type="Gene3D" id="2.40.50.140">
    <property type="entry name" value="Nucleic acid-binding proteins"/>
    <property type="match status" value="2"/>
</dbReference>
<dbReference type="HAMAP" id="MF_00141">
    <property type="entry name" value="EF_P"/>
    <property type="match status" value="1"/>
</dbReference>
<dbReference type="InterPro" id="IPR015365">
    <property type="entry name" value="Elong-fact-P_C"/>
</dbReference>
<dbReference type="InterPro" id="IPR012340">
    <property type="entry name" value="NA-bd_OB-fold"/>
</dbReference>
<dbReference type="InterPro" id="IPR014722">
    <property type="entry name" value="Rib_uL2_dom2"/>
</dbReference>
<dbReference type="InterPro" id="IPR020599">
    <property type="entry name" value="Transl_elong_fac_P/YeiP"/>
</dbReference>
<dbReference type="InterPro" id="IPR013185">
    <property type="entry name" value="Transl_elong_KOW-like"/>
</dbReference>
<dbReference type="InterPro" id="IPR001059">
    <property type="entry name" value="Transl_elong_P/YeiP_cen"/>
</dbReference>
<dbReference type="InterPro" id="IPR013852">
    <property type="entry name" value="Transl_elong_P/YeiP_CS"/>
</dbReference>
<dbReference type="InterPro" id="IPR011768">
    <property type="entry name" value="Transl_elongation_fac_P"/>
</dbReference>
<dbReference type="InterPro" id="IPR008991">
    <property type="entry name" value="Translation_prot_SH3-like_sf"/>
</dbReference>
<dbReference type="NCBIfam" id="TIGR00038">
    <property type="entry name" value="efp"/>
    <property type="match status" value="1"/>
</dbReference>
<dbReference type="NCBIfam" id="NF001810">
    <property type="entry name" value="PRK00529.1"/>
    <property type="match status" value="1"/>
</dbReference>
<dbReference type="PANTHER" id="PTHR30053">
    <property type="entry name" value="ELONGATION FACTOR P"/>
    <property type="match status" value="1"/>
</dbReference>
<dbReference type="PANTHER" id="PTHR30053:SF12">
    <property type="entry name" value="ELONGATION FACTOR P (EF-P) FAMILY PROTEIN"/>
    <property type="match status" value="1"/>
</dbReference>
<dbReference type="Pfam" id="PF01132">
    <property type="entry name" value="EFP"/>
    <property type="match status" value="1"/>
</dbReference>
<dbReference type="Pfam" id="PF08207">
    <property type="entry name" value="EFP_N"/>
    <property type="match status" value="1"/>
</dbReference>
<dbReference type="Pfam" id="PF09285">
    <property type="entry name" value="Elong-fact-P_C"/>
    <property type="match status" value="1"/>
</dbReference>
<dbReference type="PIRSF" id="PIRSF005901">
    <property type="entry name" value="EF-P"/>
    <property type="match status" value="1"/>
</dbReference>
<dbReference type="SMART" id="SM01185">
    <property type="entry name" value="EFP"/>
    <property type="match status" value="1"/>
</dbReference>
<dbReference type="SMART" id="SM00841">
    <property type="entry name" value="Elong-fact-P_C"/>
    <property type="match status" value="1"/>
</dbReference>
<dbReference type="SUPFAM" id="SSF50249">
    <property type="entry name" value="Nucleic acid-binding proteins"/>
    <property type="match status" value="2"/>
</dbReference>
<dbReference type="SUPFAM" id="SSF50104">
    <property type="entry name" value="Translation proteins SH3-like domain"/>
    <property type="match status" value="1"/>
</dbReference>
<dbReference type="PROSITE" id="PS01275">
    <property type="entry name" value="EFP"/>
    <property type="match status" value="1"/>
</dbReference>